<protein>
    <recommendedName>
        <fullName evidence="1">UvrABC system protein B</fullName>
        <shortName evidence="1">Protein UvrB</shortName>
    </recommendedName>
    <alternativeName>
        <fullName evidence="1">Excinuclease ABC subunit B</fullName>
    </alternativeName>
</protein>
<accession>P67423</accession>
<accession>A0A1R3Y100</accession>
<accession>O06150</accession>
<accession>X2BIR5</accession>
<proteinExistence type="inferred from homology"/>
<evidence type="ECO:0000255" key="1">
    <source>
        <dbReference type="HAMAP-Rule" id="MF_00204"/>
    </source>
</evidence>
<evidence type="ECO:0000256" key="2">
    <source>
        <dbReference type="SAM" id="MobiDB-lite"/>
    </source>
</evidence>
<evidence type="ECO:0000305" key="3"/>
<reference key="1">
    <citation type="journal article" date="2003" name="Proc. Natl. Acad. Sci. U.S.A.">
        <title>The complete genome sequence of Mycobacterium bovis.</title>
        <authorList>
            <person name="Garnier T."/>
            <person name="Eiglmeier K."/>
            <person name="Camus J.-C."/>
            <person name="Medina N."/>
            <person name="Mansoor H."/>
            <person name="Pryor M."/>
            <person name="Duthoy S."/>
            <person name="Grondin S."/>
            <person name="Lacroix C."/>
            <person name="Monsempe C."/>
            <person name="Simon S."/>
            <person name="Harris B."/>
            <person name="Atkin R."/>
            <person name="Doggett J."/>
            <person name="Mayes R."/>
            <person name="Keating L."/>
            <person name="Wheeler P.R."/>
            <person name="Parkhill J."/>
            <person name="Barrell B.G."/>
            <person name="Cole S.T."/>
            <person name="Gordon S.V."/>
            <person name="Hewinson R.G."/>
        </authorList>
    </citation>
    <scope>NUCLEOTIDE SEQUENCE [LARGE SCALE GENOMIC DNA]</scope>
    <source>
        <strain>ATCC BAA-935 / AF2122/97</strain>
    </source>
</reference>
<reference key="2">
    <citation type="journal article" date="2017" name="Genome Announc.">
        <title>Updated reference genome sequence and annotation of Mycobacterium bovis AF2122/97.</title>
        <authorList>
            <person name="Malone K.M."/>
            <person name="Farrell D."/>
            <person name="Stuber T.P."/>
            <person name="Schubert O.T."/>
            <person name="Aebersold R."/>
            <person name="Robbe-Austerman S."/>
            <person name="Gordon S.V."/>
        </authorList>
    </citation>
    <scope>NUCLEOTIDE SEQUENCE [LARGE SCALE GENOMIC DNA]</scope>
    <scope>GENOME REANNOTATION</scope>
    <source>
        <strain>ATCC BAA-935 / AF2122/97</strain>
    </source>
</reference>
<sequence length="719" mass="80407">MAFATEHPVVAHSEYRAVEEIVRAGGHFEVVSPHAPAGDQPAAIDELERRINAGERDVVLLGATGTGKSATTAWLIERLQRPTLVMAPNKTLAAQLANELREMLPHNAVEYFVSYYDYYQPEAYIAQTDTYIEKDSSINDDVERLRHSATSALLSRRDVVVVASVSCIYGLGTPQSYLDRSVELKVGEEVPRDGLLRLLVDVQYTRNDMSFTRGSFRVRGDTVEIIPSYEELAVRIEFFGDEIEALYYLHPLTGEVIRQVDSLRIFPATHYVAGPERMAHAVSAIEEELAERLAELESQGKLLEAQRLRMRTNYDIEMMRQVGFCSGIENYSRHIDGRGPGTPPATLLDYFPEDFLLVIDESHVTVPQIGGMYEGDISRKRNLVEYGFRLPSACDNRPLTWEEFADRIGQTVYLSATPGPYELSQTGGEFVEQVIRPTGLVDPKVVVKPTKGQIDDLIGEIRTRADADQRVLVTTLTKKMAEDLTDYLLEMGIRVRYLHSEVDTLRRVELLRQLRLGDYDVLVGINLLREGLDLPEVSLVAILDADKEGFLRSSRSLIQTIGRAARNVSGEVHMYADKITDSMREAIDETERRRAKQIAYNEANGIDPQPLRKKIADILDQVYREADDTAVVEVGGSGRNASRGRRAQGEPGRAVSAGVFEGRDTSAMPRAELADLIKDLTAQMMAAARDLQFELAARFRDEIADLKRELRGMDAAGLK</sequence>
<name>UVRB_MYCBO</name>
<comment type="function">
    <text evidence="1">The UvrABC repair system catalyzes the recognition and processing of DNA lesions. A damage recognition complex composed of 2 UvrA and 2 UvrB subunits scans DNA for abnormalities. Upon binding of the UvrA(2)B(2) complex to a putative damaged site, the DNA wraps around one UvrB monomer. DNA wrap is dependent on ATP binding by UvrB and probably causes local melting of the DNA helix, facilitating insertion of UvrB beta-hairpin between the DNA strands. Then UvrB probes one DNA strand for the presence of a lesion. If a lesion is found the UvrA subunits dissociate and the UvrB-DNA preincision complex is formed. This complex is subsequently bound by UvrC and the second UvrB is released. If no lesion is found, the DNA wraps around the other UvrB subunit that will check the other stand for damage.</text>
</comment>
<comment type="subunit">
    <text evidence="1">Forms a heterotetramer with UvrA during the search for lesions. Interacts with UvrC in an incision complex.</text>
</comment>
<comment type="subcellular location">
    <subcellularLocation>
        <location evidence="1">Cytoplasm</location>
    </subcellularLocation>
</comment>
<comment type="domain">
    <text evidence="1">The beta-hairpin motif is involved in DNA binding.</text>
</comment>
<comment type="similarity">
    <text evidence="1">Belongs to the UvrB family.</text>
</comment>
<comment type="sequence caution" evidence="3">
    <conflict type="erroneous initiation">
        <sequence resource="EMBL-CDS" id="SIU00263"/>
    </conflict>
    <text>Truncated N-terminus.</text>
</comment>
<feature type="chain" id="PRO_0000138413" description="UvrABC system protein B">
    <location>
        <begin position="1"/>
        <end position="719"/>
    </location>
</feature>
<feature type="domain" description="Helicase ATP-binding" evidence="1">
    <location>
        <begin position="49"/>
        <end position="435"/>
    </location>
</feature>
<feature type="domain" description="Helicase C-terminal" evidence="1">
    <location>
        <begin position="453"/>
        <end position="606"/>
    </location>
</feature>
<feature type="domain" description="UVR" evidence="1">
    <location>
        <begin position="674"/>
        <end position="709"/>
    </location>
</feature>
<feature type="region of interest" description="Disordered" evidence="2">
    <location>
        <begin position="635"/>
        <end position="654"/>
    </location>
</feature>
<feature type="short sequence motif" description="Beta-hairpin">
    <location>
        <begin position="115"/>
        <end position="138"/>
    </location>
</feature>
<feature type="binding site" evidence="1">
    <location>
        <begin position="62"/>
        <end position="69"/>
    </location>
    <ligand>
        <name>ATP</name>
        <dbReference type="ChEBI" id="CHEBI:30616"/>
    </ligand>
</feature>
<organism>
    <name type="scientific">Mycobacterium bovis (strain ATCC BAA-935 / AF2122/97)</name>
    <dbReference type="NCBI Taxonomy" id="233413"/>
    <lineage>
        <taxon>Bacteria</taxon>
        <taxon>Bacillati</taxon>
        <taxon>Actinomycetota</taxon>
        <taxon>Actinomycetes</taxon>
        <taxon>Mycobacteriales</taxon>
        <taxon>Mycobacteriaceae</taxon>
        <taxon>Mycobacterium</taxon>
        <taxon>Mycobacterium tuberculosis complex</taxon>
    </lineage>
</organism>
<gene>
    <name evidence="1" type="primary">uvrB</name>
    <name type="ordered locus">BQ2027_MB1659</name>
</gene>
<dbReference type="EMBL" id="LT708304">
    <property type="protein sequence ID" value="SIU00263.1"/>
    <property type="status" value="ALT_INIT"/>
    <property type="molecule type" value="Genomic_DNA"/>
</dbReference>
<dbReference type="RefSeq" id="NP_855312.1">
    <property type="nucleotide sequence ID" value="NC_002945.3"/>
</dbReference>
<dbReference type="RefSeq" id="WP_003911575.1">
    <property type="nucleotide sequence ID" value="NC_002945.4"/>
</dbReference>
<dbReference type="SMR" id="P67423"/>
<dbReference type="GeneID" id="45425602"/>
<dbReference type="KEGG" id="mbo:BQ2027_MB1659"/>
<dbReference type="PATRIC" id="fig|233413.5.peg.1811"/>
<dbReference type="Proteomes" id="UP000001419">
    <property type="component" value="Chromosome"/>
</dbReference>
<dbReference type="GO" id="GO:0005737">
    <property type="term" value="C:cytoplasm"/>
    <property type="evidence" value="ECO:0007669"/>
    <property type="project" value="UniProtKB-SubCell"/>
</dbReference>
<dbReference type="GO" id="GO:0009380">
    <property type="term" value="C:excinuclease repair complex"/>
    <property type="evidence" value="ECO:0007669"/>
    <property type="project" value="InterPro"/>
</dbReference>
<dbReference type="GO" id="GO:0005524">
    <property type="term" value="F:ATP binding"/>
    <property type="evidence" value="ECO:0007669"/>
    <property type="project" value="UniProtKB-UniRule"/>
</dbReference>
<dbReference type="GO" id="GO:0016887">
    <property type="term" value="F:ATP hydrolysis activity"/>
    <property type="evidence" value="ECO:0007669"/>
    <property type="project" value="InterPro"/>
</dbReference>
<dbReference type="GO" id="GO:0003677">
    <property type="term" value="F:DNA binding"/>
    <property type="evidence" value="ECO:0007669"/>
    <property type="project" value="UniProtKB-UniRule"/>
</dbReference>
<dbReference type="GO" id="GO:0009381">
    <property type="term" value="F:excinuclease ABC activity"/>
    <property type="evidence" value="ECO:0007669"/>
    <property type="project" value="UniProtKB-UniRule"/>
</dbReference>
<dbReference type="GO" id="GO:0006289">
    <property type="term" value="P:nucleotide-excision repair"/>
    <property type="evidence" value="ECO:0007669"/>
    <property type="project" value="UniProtKB-UniRule"/>
</dbReference>
<dbReference type="GO" id="GO:0009432">
    <property type="term" value="P:SOS response"/>
    <property type="evidence" value="ECO:0007669"/>
    <property type="project" value="UniProtKB-UniRule"/>
</dbReference>
<dbReference type="CDD" id="cd17916">
    <property type="entry name" value="DEXHc_UvrB"/>
    <property type="match status" value="1"/>
</dbReference>
<dbReference type="CDD" id="cd18790">
    <property type="entry name" value="SF2_C_UvrB"/>
    <property type="match status" value="1"/>
</dbReference>
<dbReference type="FunFam" id="3.40.50.300:FF:000257">
    <property type="entry name" value="UvrABC system protein B"/>
    <property type="match status" value="1"/>
</dbReference>
<dbReference type="FunFam" id="3.40.50.300:FF:000401">
    <property type="entry name" value="UvrABC system protein B"/>
    <property type="match status" value="1"/>
</dbReference>
<dbReference type="FunFam" id="3.40.50.300:FF:000477">
    <property type="entry name" value="UvrABC system protein B"/>
    <property type="match status" value="1"/>
</dbReference>
<dbReference type="FunFam" id="4.10.860.10:FF:000009">
    <property type="entry name" value="UvrABC system protein B"/>
    <property type="match status" value="1"/>
</dbReference>
<dbReference type="Gene3D" id="3.40.50.300">
    <property type="entry name" value="P-loop containing nucleotide triphosphate hydrolases"/>
    <property type="match status" value="3"/>
</dbReference>
<dbReference type="Gene3D" id="4.10.860.10">
    <property type="entry name" value="UVR domain"/>
    <property type="match status" value="1"/>
</dbReference>
<dbReference type="HAMAP" id="MF_00204">
    <property type="entry name" value="UvrB"/>
    <property type="match status" value="1"/>
</dbReference>
<dbReference type="InterPro" id="IPR006935">
    <property type="entry name" value="Helicase/UvrB_N"/>
</dbReference>
<dbReference type="InterPro" id="IPR014001">
    <property type="entry name" value="Helicase_ATP-bd"/>
</dbReference>
<dbReference type="InterPro" id="IPR001650">
    <property type="entry name" value="Helicase_C-like"/>
</dbReference>
<dbReference type="InterPro" id="IPR027417">
    <property type="entry name" value="P-loop_NTPase"/>
</dbReference>
<dbReference type="InterPro" id="IPR001943">
    <property type="entry name" value="UVR_dom"/>
</dbReference>
<dbReference type="InterPro" id="IPR036876">
    <property type="entry name" value="UVR_dom_sf"/>
</dbReference>
<dbReference type="InterPro" id="IPR004807">
    <property type="entry name" value="UvrB"/>
</dbReference>
<dbReference type="InterPro" id="IPR041471">
    <property type="entry name" value="UvrB_inter"/>
</dbReference>
<dbReference type="InterPro" id="IPR024759">
    <property type="entry name" value="UvrB_YAD/RRR_dom"/>
</dbReference>
<dbReference type="NCBIfam" id="NF003673">
    <property type="entry name" value="PRK05298.1"/>
    <property type="match status" value="1"/>
</dbReference>
<dbReference type="NCBIfam" id="TIGR00631">
    <property type="entry name" value="uvrb"/>
    <property type="match status" value="1"/>
</dbReference>
<dbReference type="PANTHER" id="PTHR24029">
    <property type="entry name" value="UVRABC SYSTEM PROTEIN B"/>
    <property type="match status" value="1"/>
</dbReference>
<dbReference type="PANTHER" id="PTHR24029:SF0">
    <property type="entry name" value="UVRABC SYSTEM PROTEIN B"/>
    <property type="match status" value="1"/>
</dbReference>
<dbReference type="Pfam" id="PF00271">
    <property type="entry name" value="Helicase_C"/>
    <property type="match status" value="1"/>
</dbReference>
<dbReference type="Pfam" id="PF04851">
    <property type="entry name" value="ResIII"/>
    <property type="match status" value="1"/>
</dbReference>
<dbReference type="Pfam" id="PF02151">
    <property type="entry name" value="UVR"/>
    <property type="match status" value="1"/>
</dbReference>
<dbReference type="Pfam" id="PF12344">
    <property type="entry name" value="UvrB"/>
    <property type="match status" value="1"/>
</dbReference>
<dbReference type="Pfam" id="PF17757">
    <property type="entry name" value="UvrB_inter"/>
    <property type="match status" value="1"/>
</dbReference>
<dbReference type="SMART" id="SM00487">
    <property type="entry name" value="DEXDc"/>
    <property type="match status" value="1"/>
</dbReference>
<dbReference type="SMART" id="SM00490">
    <property type="entry name" value="HELICc"/>
    <property type="match status" value="1"/>
</dbReference>
<dbReference type="SUPFAM" id="SSF46600">
    <property type="entry name" value="C-terminal UvrC-binding domain of UvrB"/>
    <property type="match status" value="1"/>
</dbReference>
<dbReference type="SUPFAM" id="SSF52540">
    <property type="entry name" value="P-loop containing nucleoside triphosphate hydrolases"/>
    <property type="match status" value="2"/>
</dbReference>
<dbReference type="PROSITE" id="PS51192">
    <property type="entry name" value="HELICASE_ATP_BIND_1"/>
    <property type="match status" value="1"/>
</dbReference>
<dbReference type="PROSITE" id="PS51194">
    <property type="entry name" value="HELICASE_CTER"/>
    <property type="match status" value="1"/>
</dbReference>
<dbReference type="PROSITE" id="PS50151">
    <property type="entry name" value="UVR"/>
    <property type="match status" value="1"/>
</dbReference>
<keyword id="KW-0067">ATP-binding</keyword>
<keyword id="KW-0963">Cytoplasm</keyword>
<keyword id="KW-0227">DNA damage</keyword>
<keyword id="KW-0228">DNA excision</keyword>
<keyword id="KW-0234">DNA repair</keyword>
<keyword id="KW-0267">Excision nuclease</keyword>
<keyword id="KW-0547">Nucleotide-binding</keyword>
<keyword id="KW-1185">Reference proteome</keyword>
<keyword id="KW-0742">SOS response</keyword>